<keyword id="KW-0963">Cytoplasm</keyword>
<keyword id="KW-0690">Ribosome biogenesis</keyword>
<comment type="function">
    <text evidence="1">Required for maturation of 30S ribosomal subunits.</text>
</comment>
<comment type="subcellular location">
    <subcellularLocation>
        <location evidence="1">Cytoplasm</location>
    </subcellularLocation>
</comment>
<comment type="similarity">
    <text evidence="1">Belongs to the RimP family.</text>
</comment>
<dbReference type="EMBL" id="CP000814">
    <property type="protein sequence ID" value="ABV51730.1"/>
    <property type="molecule type" value="Genomic_DNA"/>
</dbReference>
<dbReference type="RefSeq" id="WP_002866748.1">
    <property type="nucleotide sequence ID" value="NC_009839.1"/>
</dbReference>
<dbReference type="SMR" id="A8FJU3"/>
<dbReference type="KEGG" id="cju:C8J_0131"/>
<dbReference type="HOGENOM" id="CLU_070525_2_2_7"/>
<dbReference type="GO" id="GO:0005829">
    <property type="term" value="C:cytosol"/>
    <property type="evidence" value="ECO:0007669"/>
    <property type="project" value="TreeGrafter"/>
</dbReference>
<dbReference type="GO" id="GO:0000028">
    <property type="term" value="P:ribosomal small subunit assembly"/>
    <property type="evidence" value="ECO:0007669"/>
    <property type="project" value="TreeGrafter"/>
</dbReference>
<dbReference type="GO" id="GO:0006412">
    <property type="term" value="P:translation"/>
    <property type="evidence" value="ECO:0007669"/>
    <property type="project" value="TreeGrafter"/>
</dbReference>
<dbReference type="CDD" id="cd01734">
    <property type="entry name" value="YlxS_C"/>
    <property type="match status" value="1"/>
</dbReference>
<dbReference type="Gene3D" id="2.30.30.180">
    <property type="entry name" value="Ribosome maturation factor RimP, C-terminal domain"/>
    <property type="match status" value="1"/>
</dbReference>
<dbReference type="Gene3D" id="3.30.300.70">
    <property type="entry name" value="RimP-like superfamily, N-terminal"/>
    <property type="match status" value="1"/>
</dbReference>
<dbReference type="HAMAP" id="MF_01077">
    <property type="entry name" value="RimP"/>
    <property type="match status" value="1"/>
</dbReference>
<dbReference type="InterPro" id="IPR003728">
    <property type="entry name" value="Ribosome_maturation_RimP"/>
</dbReference>
<dbReference type="InterPro" id="IPR028998">
    <property type="entry name" value="RimP_C"/>
</dbReference>
<dbReference type="InterPro" id="IPR036847">
    <property type="entry name" value="RimP_C_sf"/>
</dbReference>
<dbReference type="InterPro" id="IPR028989">
    <property type="entry name" value="RimP_N"/>
</dbReference>
<dbReference type="InterPro" id="IPR035956">
    <property type="entry name" value="RimP_N_sf"/>
</dbReference>
<dbReference type="NCBIfam" id="NF011232">
    <property type="entry name" value="PRK14639.1"/>
    <property type="match status" value="1"/>
</dbReference>
<dbReference type="PANTHER" id="PTHR33867">
    <property type="entry name" value="RIBOSOME MATURATION FACTOR RIMP"/>
    <property type="match status" value="1"/>
</dbReference>
<dbReference type="PANTHER" id="PTHR33867:SF1">
    <property type="entry name" value="RIBOSOME MATURATION FACTOR RIMP"/>
    <property type="match status" value="1"/>
</dbReference>
<dbReference type="Pfam" id="PF17384">
    <property type="entry name" value="DUF150_C"/>
    <property type="match status" value="1"/>
</dbReference>
<dbReference type="Pfam" id="PF02576">
    <property type="entry name" value="RimP_N"/>
    <property type="match status" value="1"/>
</dbReference>
<dbReference type="SUPFAM" id="SSF74942">
    <property type="entry name" value="YhbC-like, C-terminal domain"/>
    <property type="match status" value="1"/>
</dbReference>
<dbReference type="SUPFAM" id="SSF75420">
    <property type="entry name" value="YhbC-like, N-terminal domain"/>
    <property type="match status" value="1"/>
</dbReference>
<organism>
    <name type="scientific">Campylobacter jejuni subsp. jejuni serotype O:6 (strain 81116 / NCTC 11828)</name>
    <dbReference type="NCBI Taxonomy" id="407148"/>
    <lineage>
        <taxon>Bacteria</taxon>
        <taxon>Pseudomonadati</taxon>
        <taxon>Campylobacterota</taxon>
        <taxon>Epsilonproteobacteria</taxon>
        <taxon>Campylobacterales</taxon>
        <taxon>Campylobacteraceae</taxon>
        <taxon>Campylobacter</taxon>
    </lineage>
</organism>
<proteinExistence type="inferred from homology"/>
<sequence>MNLEALCKEAGLSFYDDELVSENGRKIYRIYVQKEGGVNLDDCARLSEILSPIFDVEPPVNGEYFLEVSSPGLERKLSKIEHFAKSIGELVKITTNEKEKFEAKIIAVDDENITLENLENKEKTTINFNDIKKARTFVEW</sequence>
<gene>
    <name evidence="1" type="primary">rimP</name>
    <name type="ordered locus">C8J_0131</name>
</gene>
<reference key="1">
    <citation type="journal article" date="2007" name="J. Bacteriol.">
        <title>The complete genome sequence of Campylobacter jejuni strain 81116 (NCTC11828).</title>
        <authorList>
            <person name="Pearson B.M."/>
            <person name="Gaskin D.J.H."/>
            <person name="Segers R.P.A.M."/>
            <person name="Wells J.M."/>
            <person name="Nuijten P.J.M."/>
            <person name="van Vliet A.H.M."/>
        </authorList>
    </citation>
    <scope>NUCLEOTIDE SEQUENCE [LARGE SCALE GENOMIC DNA]</scope>
    <source>
        <strain>81116 / NCTC 11828</strain>
    </source>
</reference>
<accession>A8FJU3</accession>
<name>RIMP_CAMJ8</name>
<protein>
    <recommendedName>
        <fullName evidence="1">Ribosome maturation factor RimP</fullName>
    </recommendedName>
</protein>
<evidence type="ECO:0000255" key="1">
    <source>
        <dbReference type="HAMAP-Rule" id="MF_01077"/>
    </source>
</evidence>
<feature type="chain" id="PRO_1000073018" description="Ribosome maturation factor RimP">
    <location>
        <begin position="1"/>
        <end position="140"/>
    </location>
</feature>